<evidence type="ECO:0000250" key="1"/>
<evidence type="ECO:0000305" key="2"/>
<accession>Q652P4</accession>
<accession>Q0IZH3</accession>
<name>CPSF2_ORYSJ</name>
<sequence>MGTSVQVTPLSGAYGEGPLCYLLAVDGFRFLLDCGWTDLCDPSHLQPLAKVAPTIDAVLLSHADTMHLGALPYAMKHLGLSAPVYATEPVFRLGILTLYDYFISRRQVSDFDLFTLDDIDAAFQNVVRLKYSQNHLLNDKGEGIVIAPHVAGHDLGGTVWKITKDGEDVVYAVDFNHRKERHLNGTALGSFVRPAVLITDAYNALNNHVYKRQQDQDFIDALVKVLTGGGSVLLPIDTAGRVLEILLILEQYWAQRHLIYPIYFLTNVSTSTVDYVKSFLEWMNDSISKSFEHTRDNAFLLKCVTQIINKDELEKLGDAPKVVLASMASLEVGFSHDIFVDMANEAKNLVLFTEKGQFGTLARMLQVDPPPKAVKVTMSKRIPLVGDELKAYEEEQERIKKEEALKASLNKEEEKKASLGSNAKASDPMVIDASTSRKPSNAGSKFGGNVDILIDGFVPPSSSVAPMFPFFENTSEWDDFGEVINPEDYLMKQEEMDNTLMPGAGDGMDSMLDEGSARLLLDSTPSKVISNEMTVQVKCSLAYMDFEGRSDGRSVKSVIAHVAPLKLVLVHGSAEATEHLKMHCSKNSDLHVYAPQIEETIDVTSDLCAYKVQLSEKLMSNVISKKLGEHEIAWVDAEVGKTDDKLTLLPPSSTPAAHKSVLVGDLKLADFKQFLANKGLQVEFAGGALRCGEYITLRKIGDAGQKGSTGSQQIVIEGPLCEDYYKIRELLYSQFYLL</sequence>
<comment type="function">
    <text evidence="1">CPSF plays a key role in pre-mRNA 3'-end formation, recognizing the AAUAAA signal sequence and interacting with poly(A)polymerase and other factors to bring about cleavage and poly(A) addition.</text>
</comment>
<comment type="subunit">
    <text evidence="1">CPSF is a heterotetramer composed of four distinct subunits 160, 100, 70 and 30 kDa.</text>
</comment>
<comment type="subcellular location">
    <subcellularLocation>
        <location evidence="1">Nucleus</location>
    </subcellularLocation>
</comment>
<comment type="similarity">
    <text evidence="2">Belongs to the metallo-beta-lactamase superfamily. RNA-metabolizing metallo-beta-lactamase-like family. CPSF2/YSH1 subfamily.</text>
</comment>
<feature type="chain" id="PRO_0000247467" description="Cleavage and polyadenylation specificity factor subunit 2">
    <location>
        <begin position="1"/>
        <end position="738"/>
    </location>
</feature>
<feature type="sequence conflict" description="In Ref. 4; AK070608." evidence="2" ref="4">
    <original>E</original>
    <variation>G</variation>
    <location>
        <position position="244"/>
    </location>
</feature>
<feature type="sequence conflict" description="In Ref. 4; AK063384." evidence="2" ref="4">
    <original>V</original>
    <variation>M</variation>
    <location>
        <position position="450"/>
    </location>
</feature>
<feature type="sequence conflict" description="In Ref. 4; AK070608." evidence="2" ref="4">
    <original>F</original>
    <variation>Y</variation>
    <location>
        <position position="457"/>
    </location>
</feature>
<keyword id="KW-0507">mRNA processing</keyword>
<keyword id="KW-0539">Nucleus</keyword>
<keyword id="KW-1185">Reference proteome</keyword>
<keyword id="KW-0694">RNA-binding</keyword>
<gene>
    <name type="ordered locus">Os09g0569400</name>
    <name type="ordered locus">LOC_Os09g39590</name>
    <name type="ORF">OJ1003_C09.22</name>
</gene>
<proteinExistence type="evidence at transcript level"/>
<dbReference type="EMBL" id="AP005546">
    <property type="protein sequence ID" value="BAD46223.1"/>
    <property type="molecule type" value="Genomic_DNA"/>
</dbReference>
<dbReference type="EMBL" id="AP008215">
    <property type="protein sequence ID" value="BAF25892.1"/>
    <property type="molecule type" value="Genomic_DNA"/>
</dbReference>
<dbReference type="EMBL" id="AP014965">
    <property type="protein sequence ID" value="BAT09500.1"/>
    <property type="molecule type" value="Genomic_DNA"/>
</dbReference>
<dbReference type="EMBL" id="AK063384">
    <property type="status" value="NOT_ANNOTATED_CDS"/>
    <property type="molecule type" value="mRNA"/>
</dbReference>
<dbReference type="EMBL" id="AK070608">
    <property type="status" value="NOT_ANNOTATED_CDS"/>
    <property type="molecule type" value="mRNA"/>
</dbReference>
<dbReference type="RefSeq" id="XP_015611669.1">
    <property type="nucleotide sequence ID" value="XM_015756183.1"/>
</dbReference>
<dbReference type="SMR" id="Q652P4"/>
<dbReference type="FunCoup" id="Q652P4">
    <property type="interactions" value="2967"/>
</dbReference>
<dbReference type="STRING" id="39947.Q652P4"/>
<dbReference type="PaxDb" id="39947-Q652P4"/>
<dbReference type="EnsemblPlants" id="Os09t0569400-01">
    <property type="protein sequence ID" value="Os09t0569400-01"/>
    <property type="gene ID" value="Os09g0569400"/>
</dbReference>
<dbReference type="Gramene" id="Os09t0569400-01">
    <property type="protein sequence ID" value="Os09t0569400-01"/>
    <property type="gene ID" value="Os09g0569400"/>
</dbReference>
<dbReference type="KEGG" id="dosa:Os09g0569400"/>
<dbReference type="eggNOG" id="KOG1135">
    <property type="taxonomic scope" value="Eukaryota"/>
</dbReference>
<dbReference type="HOGENOM" id="CLU_002227_3_0_1"/>
<dbReference type="InParanoid" id="Q652P4"/>
<dbReference type="OMA" id="QSRHNME"/>
<dbReference type="OrthoDB" id="64353at2759"/>
<dbReference type="Proteomes" id="UP000000763">
    <property type="component" value="Chromosome 9"/>
</dbReference>
<dbReference type="Proteomes" id="UP000059680">
    <property type="component" value="Chromosome 9"/>
</dbReference>
<dbReference type="GO" id="GO:0005737">
    <property type="term" value="C:cytoplasm"/>
    <property type="evidence" value="ECO:0007669"/>
    <property type="project" value="EnsemblPlants"/>
</dbReference>
<dbReference type="GO" id="GO:0005847">
    <property type="term" value="C:mRNA cleavage and polyadenylation specificity factor complex"/>
    <property type="evidence" value="ECO:0000318"/>
    <property type="project" value="GO_Central"/>
</dbReference>
<dbReference type="GO" id="GO:0003723">
    <property type="term" value="F:RNA binding"/>
    <property type="evidence" value="ECO:0000318"/>
    <property type="project" value="GO_Central"/>
</dbReference>
<dbReference type="GO" id="GO:0006398">
    <property type="term" value="P:mRNA 3'-end processing by stem-loop binding and cleavage"/>
    <property type="evidence" value="ECO:0007669"/>
    <property type="project" value="InterPro"/>
</dbReference>
<dbReference type="GO" id="GO:0035194">
    <property type="term" value="P:regulatory ncRNA-mediated post-transcriptional gene silencing"/>
    <property type="evidence" value="ECO:0007669"/>
    <property type="project" value="EnsemblPlants"/>
</dbReference>
<dbReference type="CDD" id="cd16293">
    <property type="entry name" value="CPSF2-like_MBL-fold"/>
    <property type="match status" value="1"/>
</dbReference>
<dbReference type="FunFam" id="3.60.15.10:FF:000008">
    <property type="entry name" value="Cleavage and polyadenylation specificity factor subunit 2"/>
    <property type="match status" value="1"/>
</dbReference>
<dbReference type="Gene3D" id="3.60.15.10">
    <property type="entry name" value="Ribonuclease Z/Hydroxyacylglutathione hydrolase-like"/>
    <property type="match status" value="1"/>
</dbReference>
<dbReference type="InterPro" id="IPR022712">
    <property type="entry name" value="Beta_Casp"/>
</dbReference>
<dbReference type="InterPro" id="IPR027075">
    <property type="entry name" value="CPSF2"/>
</dbReference>
<dbReference type="InterPro" id="IPR025069">
    <property type="entry name" value="Cpsf2_C"/>
</dbReference>
<dbReference type="InterPro" id="IPR035639">
    <property type="entry name" value="CPSF2_MBL"/>
</dbReference>
<dbReference type="InterPro" id="IPR001279">
    <property type="entry name" value="Metallo-B-lactamas"/>
</dbReference>
<dbReference type="InterPro" id="IPR036866">
    <property type="entry name" value="RibonucZ/Hydroxyglut_hydro"/>
</dbReference>
<dbReference type="InterPro" id="IPR011108">
    <property type="entry name" value="RMMBL"/>
</dbReference>
<dbReference type="PANTHER" id="PTHR45922">
    <property type="entry name" value="CLEAVAGE AND POLYADENYLATION SPECIFICITY FACTOR SUBUNIT 2"/>
    <property type="match status" value="1"/>
</dbReference>
<dbReference type="PANTHER" id="PTHR45922:SF1">
    <property type="entry name" value="CLEAVAGE AND POLYADENYLATION SPECIFICITY FACTOR SUBUNIT 2"/>
    <property type="match status" value="1"/>
</dbReference>
<dbReference type="Pfam" id="PF10996">
    <property type="entry name" value="Beta-Casp"/>
    <property type="match status" value="1"/>
</dbReference>
<dbReference type="Pfam" id="PF13299">
    <property type="entry name" value="CPSF100_C"/>
    <property type="match status" value="1"/>
</dbReference>
<dbReference type="Pfam" id="PF16661">
    <property type="entry name" value="Lactamase_B_6"/>
    <property type="match status" value="1"/>
</dbReference>
<dbReference type="Pfam" id="PF07521">
    <property type="entry name" value="RMMBL"/>
    <property type="match status" value="1"/>
</dbReference>
<dbReference type="SMART" id="SM01027">
    <property type="entry name" value="Beta-Casp"/>
    <property type="match status" value="1"/>
</dbReference>
<dbReference type="SMART" id="SM00849">
    <property type="entry name" value="Lactamase_B"/>
    <property type="match status" value="1"/>
</dbReference>
<dbReference type="SUPFAM" id="SSF56281">
    <property type="entry name" value="Metallo-hydrolase/oxidoreductase"/>
    <property type="match status" value="1"/>
</dbReference>
<protein>
    <recommendedName>
        <fullName>Cleavage and polyadenylation specificity factor subunit 2</fullName>
    </recommendedName>
    <alternativeName>
        <fullName>Cleavage and polyadenylation specificity factor 100 kDa subunit</fullName>
        <shortName>CPSF 100 kDa subunit</shortName>
    </alternativeName>
</protein>
<organism>
    <name type="scientific">Oryza sativa subsp. japonica</name>
    <name type="common">Rice</name>
    <dbReference type="NCBI Taxonomy" id="39947"/>
    <lineage>
        <taxon>Eukaryota</taxon>
        <taxon>Viridiplantae</taxon>
        <taxon>Streptophyta</taxon>
        <taxon>Embryophyta</taxon>
        <taxon>Tracheophyta</taxon>
        <taxon>Spermatophyta</taxon>
        <taxon>Magnoliopsida</taxon>
        <taxon>Liliopsida</taxon>
        <taxon>Poales</taxon>
        <taxon>Poaceae</taxon>
        <taxon>BOP clade</taxon>
        <taxon>Oryzoideae</taxon>
        <taxon>Oryzeae</taxon>
        <taxon>Oryzinae</taxon>
        <taxon>Oryza</taxon>
        <taxon>Oryza sativa</taxon>
    </lineage>
</organism>
<reference key="1">
    <citation type="journal article" date="2005" name="Nature">
        <title>The map-based sequence of the rice genome.</title>
        <authorList>
            <consortium name="International rice genome sequencing project (IRGSP)"/>
        </authorList>
    </citation>
    <scope>NUCLEOTIDE SEQUENCE [LARGE SCALE GENOMIC DNA]</scope>
    <source>
        <strain>cv. Nipponbare</strain>
    </source>
</reference>
<reference key="2">
    <citation type="journal article" date="2008" name="Nucleic Acids Res.">
        <title>The rice annotation project database (RAP-DB): 2008 update.</title>
        <authorList>
            <consortium name="The rice annotation project (RAP)"/>
        </authorList>
    </citation>
    <scope>GENOME REANNOTATION</scope>
    <source>
        <strain>cv. Nipponbare</strain>
    </source>
</reference>
<reference key="3">
    <citation type="journal article" date="2013" name="Rice">
        <title>Improvement of the Oryza sativa Nipponbare reference genome using next generation sequence and optical map data.</title>
        <authorList>
            <person name="Kawahara Y."/>
            <person name="de la Bastide M."/>
            <person name="Hamilton J.P."/>
            <person name="Kanamori H."/>
            <person name="McCombie W.R."/>
            <person name="Ouyang S."/>
            <person name="Schwartz D.C."/>
            <person name="Tanaka T."/>
            <person name="Wu J."/>
            <person name="Zhou S."/>
            <person name="Childs K.L."/>
            <person name="Davidson R.M."/>
            <person name="Lin H."/>
            <person name="Quesada-Ocampo L."/>
            <person name="Vaillancourt B."/>
            <person name="Sakai H."/>
            <person name="Lee S.S."/>
            <person name="Kim J."/>
            <person name="Numa H."/>
            <person name="Itoh T."/>
            <person name="Buell C.R."/>
            <person name="Matsumoto T."/>
        </authorList>
    </citation>
    <scope>GENOME REANNOTATION</scope>
    <source>
        <strain>cv. Nipponbare</strain>
    </source>
</reference>
<reference key="4">
    <citation type="journal article" date="2003" name="Science">
        <title>Collection, mapping, and annotation of over 28,000 cDNA clones from japonica rice.</title>
        <authorList>
            <consortium name="The rice full-length cDNA consortium"/>
        </authorList>
    </citation>
    <scope>NUCLEOTIDE SEQUENCE [LARGE SCALE MRNA]</scope>
    <source>
        <strain>cv. Nipponbare</strain>
    </source>
</reference>